<accession>P04092</accession>
<gene>
    <name type="primary">gcg2</name>
</gene>
<reference key="1">
    <citation type="journal article" date="1983" name="J. Biol. Chem.">
        <title>Anglerfish islet pre-proglucagon II. Nucleotide and corresponding amino acid sequence of the cDNA.</title>
        <authorList>
            <person name="Lund P.K."/>
            <person name="Goodman R.H."/>
            <person name="Montminy M.R."/>
            <person name="Dee P.C."/>
            <person name="Habener J.F."/>
        </authorList>
    </citation>
    <scope>NUCLEOTIDE SEQUENCE [MRNA]</scope>
</reference>
<reference key="2">
    <citation type="journal article" date="1986" name="Peptides">
        <title>Specific glucagon-related peptides isolated from anglerfish islets are metabolic cleavage products of (pre)proglucagon-II.</title>
        <authorList>
            <person name="Noe B.D."/>
            <person name="Andrews P.C."/>
        </authorList>
    </citation>
    <scope>PROTEOLYTIC PROCESSING</scope>
</reference>
<feature type="signal peptide">
    <location>
        <begin position="1"/>
        <end position="21"/>
    </location>
</feature>
<feature type="peptide" id="PRO_0000011347" description="Glicentin-related polypeptide">
    <location>
        <begin position="22"/>
        <end position="49"/>
    </location>
</feature>
<feature type="peptide" id="PRO_0000011348" description="Glucagon-2">
    <location>
        <begin position="52"/>
        <end position="80"/>
    </location>
</feature>
<feature type="propeptide" id="PRO_0000011349">
    <location>
        <begin position="83"/>
        <end position="86"/>
    </location>
</feature>
<feature type="peptide" id="PRO_0000011350" description="Glucagon-like peptide 2">
    <location>
        <begin position="89"/>
        <end position="119"/>
    </location>
</feature>
<feature type="propeptide" id="PRO_0000011351">
    <location>
        <position position="122"/>
    </location>
</feature>
<comment type="function">
    <text>Promotes hydrolysis of glycogen and lipids, and raises the blood sugar level.</text>
</comment>
<comment type="subcellular location">
    <subcellularLocation>
        <location>Secreted</location>
    </subcellularLocation>
</comment>
<comment type="induction">
    <text>Produced in the A cells of the islets of Langerhans in response to a drop in blood sugar concentration.</text>
</comment>
<comment type="similarity">
    <text evidence="1">Belongs to the glucagon family.</text>
</comment>
<organism>
    <name type="scientific">Lophius americanus</name>
    <name type="common">American angler</name>
    <name type="synonym">Anglerfish</name>
    <dbReference type="NCBI Taxonomy" id="8073"/>
    <lineage>
        <taxon>Eukaryota</taxon>
        <taxon>Metazoa</taxon>
        <taxon>Chordata</taxon>
        <taxon>Craniata</taxon>
        <taxon>Vertebrata</taxon>
        <taxon>Euteleostomi</taxon>
        <taxon>Actinopterygii</taxon>
        <taxon>Neopterygii</taxon>
        <taxon>Teleostei</taxon>
        <taxon>Neoteleostei</taxon>
        <taxon>Acanthomorphata</taxon>
        <taxon>Eupercaria</taxon>
        <taxon>Lophiiformes</taxon>
        <taxon>Lophiidae</taxon>
        <taxon>Lophius</taxon>
    </lineage>
</organism>
<protein>
    <recommendedName>
        <fullName>Glucagon-2</fullName>
    </recommendedName>
    <alternativeName>
        <fullName>Glucagon II</fullName>
    </alternativeName>
    <component>
        <recommendedName>
            <fullName>Glicentin-related polypeptide</fullName>
            <shortName>GRPP</shortName>
        </recommendedName>
    </component>
    <component>
        <recommendedName>
            <fullName>Glucagon-2</fullName>
        </recommendedName>
        <alternativeName>
            <fullName>Glucagon II</fullName>
        </alternativeName>
    </component>
    <component>
        <recommendedName>
            <fullName>Glucagon-like peptide 2</fullName>
        </recommendedName>
        <alternativeName>
            <fullName>Glucagon-like peptide II</fullName>
        </alternativeName>
    </component>
</protein>
<name>GLUC2_LOPAM</name>
<dbReference type="EMBL" id="V00632">
    <property type="protein sequence ID" value="CAA23905.1"/>
    <property type="molecule type" value="mRNA"/>
</dbReference>
<dbReference type="PIR" id="A05150">
    <property type="entry name" value="GCAF2"/>
</dbReference>
<dbReference type="SMR" id="P04092"/>
<dbReference type="GO" id="GO:0005576">
    <property type="term" value="C:extracellular region"/>
    <property type="evidence" value="ECO:0007669"/>
    <property type="project" value="UniProtKB-SubCell"/>
</dbReference>
<dbReference type="GO" id="GO:0031769">
    <property type="term" value="F:glucagon receptor binding"/>
    <property type="evidence" value="ECO:0007669"/>
    <property type="project" value="TreeGrafter"/>
</dbReference>
<dbReference type="GO" id="GO:0005179">
    <property type="term" value="F:hormone activity"/>
    <property type="evidence" value="ECO:0007669"/>
    <property type="project" value="UniProtKB-KW"/>
</dbReference>
<dbReference type="GO" id="GO:0042594">
    <property type="term" value="P:response to starvation"/>
    <property type="evidence" value="ECO:0007669"/>
    <property type="project" value="TreeGrafter"/>
</dbReference>
<dbReference type="Gene3D" id="6.10.250.590">
    <property type="match status" value="2"/>
</dbReference>
<dbReference type="InterPro" id="IPR015550">
    <property type="entry name" value="Glucagon"/>
</dbReference>
<dbReference type="InterPro" id="IPR000532">
    <property type="entry name" value="Glucagon_GIP_secretin_VIP"/>
</dbReference>
<dbReference type="PANTHER" id="PTHR11418">
    <property type="entry name" value="GLUCAGON"/>
    <property type="match status" value="1"/>
</dbReference>
<dbReference type="PANTHER" id="PTHR11418:SF0">
    <property type="entry name" value="PRO-GLUCAGON"/>
    <property type="match status" value="1"/>
</dbReference>
<dbReference type="Pfam" id="PF00123">
    <property type="entry name" value="Hormone_2"/>
    <property type="match status" value="2"/>
</dbReference>
<dbReference type="PRINTS" id="PR00275">
    <property type="entry name" value="GLUCAGON"/>
</dbReference>
<dbReference type="SMART" id="SM00070">
    <property type="entry name" value="GLUCA"/>
    <property type="match status" value="2"/>
</dbReference>
<dbReference type="PROSITE" id="PS00260">
    <property type="entry name" value="GLUCAGON"/>
    <property type="match status" value="2"/>
</dbReference>
<proteinExistence type="evidence at protein level"/>
<sequence>MTSLHSLAGLLLLMIIQSSWQMPDQDPDRNSMLLNENSMLTEPIEPLNMKRHSEGTFSNDYSKYLETRRAQDFVQWLKNSKRNGLFRRHADGTYTSDVSSYLQDQAAKDFVSWLKAGRGRRE</sequence>
<evidence type="ECO:0000305" key="1"/>
<keyword id="KW-0165">Cleavage on pair of basic residues</keyword>
<keyword id="KW-0372">Hormone</keyword>
<keyword id="KW-0964">Secreted</keyword>
<keyword id="KW-0732">Signal</keyword>